<name>PGK_STRMU</name>
<organism>
    <name type="scientific">Streptococcus mutans serotype c (strain ATCC 700610 / UA159)</name>
    <dbReference type="NCBI Taxonomy" id="210007"/>
    <lineage>
        <taxon>Bacteria</taxon>
        <taxon>Bacillati</taxon>
        <taxon>Bacillota</taxon>
        <taxon>Bacilli</taxon>
        <taxon>Lactobacillales</taxon>
        <taxon>Streptococcaceae</taxon>
        <taxon>Streptococcus</taxon>
    </lineage>
</organism>
<protein>
    <recommendedName>
        <fullName evidence="1">Phosphoglycerate kinase</fullName>
        <ecNumber evidence="1">2.7.2.3</ecNumber>
    </recommendedName>
</protein>
<comment type="catalytic activity">
    <reaction evidence="1">
        <text>(2R)-3-phosphoglycerate + ATP = (2R)-3-phospho-glyceroyl phosphate + ADP</text>
        <dbReference type="Rhea" id="RHEA:14801"/>
        <dbReference type="ChEBI" id="CHEBI:30616"/>
        <dbReference type="ChEBI" id="CHEBI:57604"/>
        <dbReference type="ChEBI" id="CHEBI:58272"/>
        <dbReference type="ChEBI" id="CHEBI:456216"/>
        <dbReference type="EC" id="2.7.2.3"/>
    </reaction>
</comment>
<comment type="pathway">
    <text evidence="1">Carbohydrate degradation; glycolysis; pyruvate from D-glyceraldehyde 3-phosphate: step 2/5.</text>
</comment>
<comment type="subunit">
    <text evidence="1">Monomer.</text>
</comment>
<comment type="subcellular location">
    <subcellularLocation>
        <location evidence="1">Cytoplasm</location>
    </subcellularLocation>
</comment>
<comment type="similarity">
    <text evidence="1">Belongs to the phosphoglycerate kinase family.</text>
</comment>
<sequence length="398" mass="42045">MAKLTVKDVDLKGKKVLVRVDFNVPVKDGVITNDNRITAALPTIKYIIEHGGRAVLFSHLGRVKEEADKKGKSLAPVAADLAKKLVQEVVFPGVTRGEQLEAAINALKNGEVLLVENTRFEDVDGKKESKNDPELGKYWASLGDGIFVNDAFGTAHRAHASNVGISANVDKAVAGFLLENEIAYIQEAVDNPVRPFIAILGGSKVSDKIGVIENLLKKADKVLIGGGMTYTFLKAQGIEIGDSLVEEDKLDIAKDLLAKANGKLILPVDSKEANAFADYTEVKDTEGAAVDPGFLGLDIGPKSIAKFDDELTGAKTVVWNGPMGVFENPDFQAGTIGVMDAIVKQPGVKSIIGGGDSAAAAINLGRADKFSWISTGGGASMELLEGKVLPGLAALTEK</sequence>
<feature type="chain" id="PRO_0000146014" description="Phosphoglycerate kinase">
    <location>
        <begin position="1"/>
        <end position="398"/>
    </location>
</feature>
<feature type="binding site" evidence="1">
    <location>
        <begin position="21"/>
        <end position="23"/>
    </location>
    <ligand>
        <name>substrate</name>
    </ligand>
</feature>
<feature type="binding site" evidence="1">
    <location>
        <position position="36"/>
    </location>
    <ligand>
        <name>substrate</name>
    </ligand>
</feature>
<feature type="binding site" evidence="1">
    <location>
        <begin position="59"/>
        <end position="62"/>
    </location>
    <ligand>
        <name>substrate</name>
    </ligand>
</feature>
<feature type="binding site" evidence="1">
    <location>
        <position position="119"/>
    </location>
    <ligand>
        <name>substrate</name>
    </ligand>
</feature>
<feature type="binding site" evidence="1">
    <location>
        <position position="157"/>
    </location>
    <ligand>
        <name>substrate</name>
    </ligand>
</feature>
<feature type="binding site" evidence="1">
    <location>
        <position position="208"/>
    </location>
    <ligand>
        <name>ATP</name>
        <dbReference type="ChEBI" id="CHEBI:30616"/>
    </ligand>
</feature>
<feature type="binding site" evidence="1">
    <location>
        <position position="296"/>
    </location>
    <ligand>
        <name>ATP</name>
        <dbReference type="ChEBI" id="CHEBI:30616"/>
    </ligand>
</feature>
<feature type="binding site" evidence="1">
    <location>
        <position position="327"/>
    </location>
    <ligand>
        <name>ATP</name>
        <dbReference type="ChEBI" id="CHEBI:30616"/>
    </ligand>
</feature>
<feature type="binding site" evidence="1">
    <location>
        <begin position="354"/>
        <end position="357"/>
    </location>
    <ligand>
        <name>ATP</name>
        <dbReference type="ChEBI" id="CHEBI:30616"/>
    </ligand>
</feature>
<dbReference type="EC" id="2.7.2.3" evidence="1"/>
<dbReference type="EMBL" id="AE014133">
    <property type="protein sequence ID" value="AAN58119.1"/>
    <property type="molecule type" value="Genomic_DNA"/>
</dbReference>
<dbReference type="RefSeq" id="NP_720813.1">
    <property type="nucleotide sequence ID" value="NC_004350.2"/>
</dbReference>
<dbReference type="RefSeq" id="WP_002279636.1">
    <property type="nucleotide sequence ID" value="NC_004350.2"/>
</dbReference>
<dbReference type="SMR" id="Q8DVV2"/>
<dbReference type="STRING" id="210007.SMU_361"/>
<dbReference type="KEGG" id="smu:SMU_361"/>
<dbReference type="PATRIC" id="fig|210007.7.peg.315"/>
<dbReference type="eggNOG" id="COG0126">
    <property type="taxonomic scope" value="Bacteria"/>
</dbReference>
<dbReference type="HOGENOM" id="CLU_025427_0_2_9"/>
<dbReference type="OrthoDB" id="9808460at2"/>
<dbReference type="PhylomeDB" id="Q8DVV2"/>
<dbReference type="UniPathway" id="UPA00109">
    <property type="reaction ID" value="UER00185"/>
</dbReference>
<dbReference type="Proteomes" id="UP000002512">
    <property type="component" value="Chromosome"/>
</dbReference>
<dbReference type="GO" id="GO:0005829">
    <property type="term" value="C:cytosol"/>
    <property type="evidence" value="ECO:0007669"/>
    <property type="project" value="TreeGrafter"/>
</dbReference>
<dbReference type="GO" id="GO:0043531">
    <property type="term" value="F:ADP binding"/>
    <property type="evidence" value="ECO:0007669"/>
    <property type="project" value="TreeGrafter"/>
</dbReference>
<dbReference type="GO" id="GO:0005524">
    <property type="term" value="F:ATP binding"/>
    <property type="evidence" value="ECO:0007669"/>
    <property type="project" value="UniProtKB-KW"/>
</dbReference>
<dbReference type="GO" id="GO:0004618">
    <property type="term" value="F:phosphoglycerate kinase activity"/>
    <property type="evidence" value="ECO:0007669"/>
    <property type="project" value="UniProtKB-UniRule"/>
</dbReference>
<dbReference type="GO" id="GO:0006094">
    <property type="term" value="P:gluconeogenesis"/>
    <property type="evidence" value="ECO:0007669"/>
    <property type="project" value="TreeGrafter"/>
</dbReference>
<dbReference type="GO" id="GO:0006096">
    <property type="term" value="P:glycolytic process"/>
    <property type="evidence" value="ECO:0007669"/>
    <property type="project" value="UniProtKB-UniRule"/>
</dbReference>
<dbReference type="FunFam" id="3.40.50.1260:FF:000001">
    <property type="entry name" value="Phosphoglycerate kinase"/>
    <property type="match status" value="1"/>
</dbReference>
<dbReference type="FunFam" id="3.40.50.1260:FF:000008">
    <property type="entry name" value="Phosphoglycerate kinase"/>
    <property type="match status" value="1"/>
</dbReference>
<dbReference type="Gene3D" id="3.40.50.1260">
    <property type="entry name" value="Phosphoglycerate kinase, N-terminal domain"/>
    <property type="match status" value="2"/>
</dbReference>
<dbReference type="HAMAP" id="MF_00145">
    <property type="entry name" value="Phosphoglyc_kinase"/>
    <property type="match status" value="1"/>
</dbReference>
<dbReference type="InterPro" id="IPR001576">
    <property type="entry name" value="Phosphoglycerate_kinase"/>
</dbReference>
<dbReference type="InterPro" id="IPR015911">
    <property type="entry name" value="Phosphoglycerate_kinase_CS"/>
</dbReference>
<dbReference type="InterPro" id="IPR015824">
    <property type="entry name" value="Phosphoglycerate_kinase_N"/>
</dbReference>
<dbReference type="InterPro" id="IPR036043">
    <property type="entry name" value="Phosphoglycerate_kinase_sf"/>
</dbReference>
<dbReference type="PANTHER" id="PTHR11406">
    <property type="entry name" value="PHOSPHOGLYCERATE KINASE"/>
    <property type="match status" value="1"/>
</dbReference>
<dbReference type="PANTHER" id="PTHR11406:SF23">
    <property type="entry name" value="PHOSPHOGLYCERATE KINASE 1, CHLOROPLASTIC-RELATED"/>
    <property type="match status" value="1"/>
</dbReference>
<dbReference type="Pfam" id="PF00162">
    <property type="entry name" value="PGK"/>
    <property type="match status" value="1"/>
</dbReference>
<dbReference type="PIRSF" id="PIRSF000724">
    <property type="entry name" value="Pgk"/>
    <property type="match status" value="1"/>
</dbReference>
<dbReference type="PRINTS" id="PR00477">
    <property type="entry name" value="PHGLYCKINASE"/>
</dbReference>
<dbReference type="SUPFAM" id="SSF53748">
    <property type="entry name" value="Phosphoglycerate kinase"/>
    <property type="match status" value="1"/>
</dbReference>
<dbReference type="PROSITE" id="PS00111">
    <property type="entry name" value="PGLYCERATE_KINASE"/>
    <property type="match status" value="1"/>
</dbReference>
<keyword id="KW-0067">ATP-binding</keyword>
<keyword id="KW-0963">Cytoplasm</keyword>
<keyword id="KW-0324">Glycolysis</keyword>
<keyword id="KW-0418">Kinase</keyword>
<keyword id="KW-0547">Nucleotide-binding</keyword>
<keyword id="KW-1185">Reference proteome</keyword>
<keyword id="KW-0808">Transferase</keyword>
<accession>Q8DVV2</accession>
<reference key="1">
    <citation type="journal article" date="2002" name="Proc. Natl. Acad. Sci. U.S.A.">
        <title>Genome sequence of Streptococcus mutans UA159, a cariogenic dental pathogen.</title>
        <authorList>
            <person name="Ajdic D.J."/>
            <person name="McShan W.M."/>
            <person name="McLaughlin R.E."/>
            <person name="Savic G."/>
            <person name="Chang J."/>
            <person name="Carson M.B."/>
            <person name="Primeaux C."/>
            <person name="Tian R."/>
            <person name="Kenton S."/>
            <person name="Jia H.G."/>
            <person name="Lin S.P."/>
            <person name="Qian Y."/>
            <person name="Li S."/>
            <person name="Zhu H."/>
            <person name="Najar F.Z."/>
            <person name="Lai H."/>
            <person name="White J."/>
            <person name="Roe B.A."/>
            <person name="Ferretti J.J."/>
        </authorList>
    </citation>
    <scope>NUCLEOTIDE SEQUENCE [LARGE SCALE GENOMIC DNA]</scope>
    <source>
        <strain>ATCC 700610 / UA159</strain>
    </source>
</reference>
<gene>
    <name evidence="1" type="primary">pgk</name>
    <name type="ordered locus">SMU_361</name>
</gene>
<proteinExistence type="inferred from homology"/>
<evidence type="ECO:0000255" key="1">
    <source>
        <dbReference type="HAMAP-Rule" id="MF_00145"/>
    </source>
</evidence>